<sequence length="160" mass="17706">MGVTKKPDLKDPVLRARLAKGMGHNYYGEPAWPNDLLYIFPVVILGTIACTVGLAVLEPSIIGEPANPFATPLEILPEWYFFPVFQILRTVPNKFFGVLLMTSVPFGLLTVPFLENVNQFQNPFRRPVATSVFLIGTVISLWLGFGAVLPIEESLTLGLF</sequence>
<gene>
    <name evidence="2" type="primary">petD</name>
</gene>
<protein>
    <recommendedName>
        <fullName evidence="2">Cytochrome b6-f complex subunit 4</fullName>
    </recommendedName>
    <alternativeName>
        <fullName evidence="2">17 kDa polypeptide</fullName>
    </alternativeName>
</protein>
<name>PETD_WELMI</name>
<keyword id="KW-0150">Chloroplast</keyword>
<keyword id="KW-0249">Electron transport</keyword>
<keyword id="KW-0472">Membrane</keyword>
<keyword id="KW-0602">Photosynthesis</keyword>
<keyword id="KW-0934">Plastid</keyword>
<keyword id="KW-0793">Thylakoid</keyword>
<keyword id="KW-0812">Transmembrane</keyword>
<keyword id="KW-1133">Transmembrane helix</keyword>
<keyword id="KW-0813">Transport</keyword>
<evidence type="ECO:0000250" key="1"/>
<evidence type="ECO:0000255" key="2">
    <source>
        <dbReference type="HAMAP-Rule" id="MF_01344"/>
    </source>
</evidence>
<reference key="1">
    <citation type="journal article" date="2008" name="BMC Evol. Biol.">
        <title>The complete plastid genome sequence of Welwitschia mirabilis: an unusually compact plastome with accelerated divergence rates.</title>
        <authorList>
            <person name="McCoy S.R."/>
            <person name="Kuehl J.V."/>
            <person name="Boore J.L."/>
            <person name="Raubeson L.A."/>
        </authorList>
    </citation>
    <scope>NUCLEOTIDE SEQUENCE [LARGE SCALE GENOMIC DNA]</scope>
</reference>
<reference key="2">
    <citation type="journal article" date="2009" name="Mol. Phylogenet. Evol.">
        <title>Evolution of reduced and compact chloroplast genomes (cpDNAs) in gnetophytes: Selection toward a lower-cost strategy.</title>
        <authorList>
            <person name="Wu C.-S."/>
            <person name="Lai Y.-T."/>
            <person name="Lin C.-P."/>
            <person name="Wang Y.-N."/>
            <person name="Chaw S.-M."/>
        </authorList>
    </citation>
    <scope>NUCLEOTIDE SEQUENCE [LARGE SCALE GENOMIC DNA]</scope>
</reference>
<feature type="chain" id="PRO_1000166450" description="Cytochrome b6-f complex subunit 4">
    <location>
        <begin position="1"/>
        <end position="160"/>
    </location>
</feature>
<feature type="transmembrane region" description="Helical" evidence="2">
    <location>
        <begin position="36"/>
        <end position="56"/>
    </location>
</feature>
<feature type="transmembrane region" description="Helical" evidence="2">
    <location>
        <begin position="68"/>
        <end position="88"/>
    </location>
</feature>
<feature type="transmembrane region" description="Helical" evidence="2">
    <location>
        <begin position="95"/>
        <end position="115"/>
    </location>
</feature>
<feature type="transmembrane region" description="Helical" evidence="2">
    <location>
        <begin position="131"/>
        <end position="151"/>
    </location>
</feature>
<proteinExistence type="inferred from homology"/>
<organism>
    <name type="scientific">Welwitschia mirabilis</name>
    <name type="common">Tree tumbo</name>
    <name type="synonym">Welwitschia bainesii</name>
    <dbReference type="NCBI Taxonomy" id="3377"/>
    <lineage>
        <taxon>Eukaryota</taxon>
        <taxon>Viridiplantae</taxon>
        <taxon>Streptophyta</taxon>
        <taxon>Embryophyta</taxon>
        <taxon>Tracheophyta</taxon>
        <taxon>Spermatophyta</taxon>
        <taxon>Gnetopsida</taxon>
        <taxon>Gnetidae</taxon>
        <taxon>Welwitschiales</taxon>
        <taxon>Welwitschiaceae</taxon>
        <taxon>Welwitschia</taxon>
    </lineage>
</organism>
<comment type="function">
    <text evidence="2">Component of the cytochrome b6-f complex, which mediates electron transfer between photosystem II (PSII) and photosystem I (PSI), cyclic electron flow around PSI, and state transitions.</text>
</comment>
<comment type="subunit">
    <text evidence="1">The 4 large subunits of the cytochrome b6-f complex are cytochrome b6, subunit IV (17 kDa polypeptide, petD), cytochrome f and the Rieske protein, while the 4 small subunits are petG, petL, petM and petN. The complex functions as a dimer (By similarity).</text>
</comment>
<comment type="subcellular location">
    <subcellularLocation>
        <location evidence="2">Plastid</location>
        <location evidence="2">Chloroplast thylakoid membrane</location>
        <topology evidence="2">Multi-pass membrane protein</topology>
    </subcellularLocation>
</comment>
<comment type="similarity">
    <text evidence="2">Belongs to the cytochrome b family. PetD subfamily.</text>
</comment>
<dbReference type="EMBL" id="EU342371">
    <property type="protein sequence ID" value="ABY26820.1"/>
    <property type="molecule type" value="Genomic_DNA"/>
</dbReference>
<dbReference type="EMBL" id="AP009568">
    <property type="protein sequence ID" value="BAH11198.1"/>
    <property type="molecule type" value="Genomic_DNA"/>
</dbReference>
<dbReference type="RefSeq" id="YP_001876607.1">
    <property type="nucleotide sequence ID" value="NC_010654.1"/>
</dbReference>
<dbReference type="SMR" id="B2Y1Z0"/>
<dbReference type="GeneID" id="6276161"/>
<dbReference type="GO" id="GO:0009535">
    <property type="term" value="C:chloroplast thylakoid membrane"/>
    <property type="evidence" value="ECO:0007669"/>
    <property type="project" value="UniProtKB-SubCell"/>
</dbReference>
<dbReference type="GO" id="GO:0045158">
    <property type="term" value="F:electron transporter, transferring electrons within cytochrome b6/f complex of photosystem II activity"/>
    <property type="evidence" value="ECO:0007669"/>
    <property type="project" value="UniProtKB-UniRule"/>
</dbReference>
<dbReference type="GO" id="GO:0045156">
    <property type="term" value="F:electron transporter, transferring electrons within the cyclic electron transport pathway of photosynthesis activity"/>
    <property type="evidence" value="ECO:0007669"/>
    <property type="project" value="InterPro"/>
</dbReference>
<dbReference type="GO" id="GO:0016491">
    <property type="term" value="F:oxidoreductase activity"/>
    <property type="evidence" value="ECO:0007669"/>
    <property type="project" value="InterPro"/>
</dbReference>
<dbReference type="GO" id="GO:0009767">
    <property type="term" value="P:photosynthetic electron transport chain"/>
    <property type="evidence" value="ECO:0007669"/>
    <property type="project" value="InterPro"/>
</dbReference>
<dbReference type="CDD" id="cd00290">
    <property type="entry name" value="cytochrome_b_C"/>
    <property type="match status" value="1"/>
</dbReference>
<dbReference type="FunFam" id="1.10.287.980:FF:000001">
    <property type="entry name" value="Cytochrome b6-f complex subunit 4"/>
    <property type="match status" value="1"/>
</dbReference>
<dbReference type="FunFam" id="1.20.5.510:FF:000002">
    <property type="entry name" value="Cytochrome b6-f complex subunit 4"/>
    <property type="match status" value="1"/>
</dbReference>
<dbReference type="Gene3D" id="1.10.287.980">
    <property type="entry name" value="plastocyanin oxidoreductase"/>
    <property type="match status" value="1"/>
</dbReference>
<dbReference type="Gene3D" id="1.20.5.510">
    <property type="entry name" value="Single helix bin"/>
    <property type="match status" value="1"/>
</dbReference>
<dbReference type="HAMAP" id="MF_01344">
    <property type="entry name" value="Cytb6_f_subIV"/>
    <property type="match status" value="1"/>
</dbReference>
<dbReference type="InterPro" id="IPR005798">
    <property type="entry name" value="Cyt_b/b6_C"/>
</dbReference>
<dbReference type="InterPro" id="IPR036150">
    <property type="entry name" value="Cyt_b/b6_C_sf"/>
</dbReference>
<dbReference type="InterPro" id="IPR005870">
    <property type="entry name" value="Cyt_b6/f_cplx_suIV"/>
</dbReference>
<dbReference type="InterPro" id="IPR048260">
    <property type="entry name" value="Cytochrome_b_C_euk/bac"/>
</dbReference>
<dbReference type="NCBIfam" id="TIGR01156">
    <property type="entry name" value="cytb6_f_IV"/>
    <property type="match status" value="1"/>
</dbReference>
<dbReference type="PANTHER" id="PTHR19271">
    <property type="entry name" value="CYTOCHROME B"/>
    <property type="match status" value="1"/>
</dbReference>
<dbReference type="PANTHER" id="PTHR19271:SF16">
    <property type="entry name" value="CYTOCHROME B"/>
    <property type="match status" value="1"/>
</dbReference>
<dbReference type="Pfam" id="PF00032">
    <property type="entry name" value="Cytochrom_B_C"/>
    <property type="match status" value="1"/>
</dbReference>
<dbReference type="PIRSF" id="PIRSF000033">
    <property type="entry name" value="B6f_17K"/>
    <property type="match status" value="1"/>
</dbReference>
<dbReference type="SUPFAM" id="SSF81648">
    <property type="entry name" value="a domain/subunit of cytochrome bc1 complex (Ubiquinol-cytochrome c reductase)"/>
    <property type="match status" value="1"/>
</dbReference>
<dbReference type="PROSITE" id="PS51003">
    <property type="entry name" value="CYTB_CTER"/>
    <property type="match status" value="1"/>
</dbReference>
<accession>B2Y1Z0</accession>
<geneLocation type="chloroplast"/>